<sequence length="337" mass="38477">MQIVEQMKDKALAELNLVKDKKTLDDIRVKYLGKKGELTEMMKLIATLPNDEKPKLGQAVNIAKQALQEAINLKLANFEEQELNEKLAQEKIDITLSGVGQNQGSLHPVTKTLNRIEAFFKQNGFAIEFGPEIESDYYNFETLNIPSHHPARAMHDTFYIDETHVLRTHTSGVQIRTMEKQQPPIRIIAPGRVYRCDSDITHTPMFHQVEGLLVDKDVSFADLKGLLHAFLNSFFEKDLKVRFRPSYFPFTEPSAEADIECVMCDGKGCRVCKHTGWLEVLGCGMVHPKVLKAGNIDSEKYQGFAFGMGVERLSMLRYGIDDLRMFFENDLRFLKQF</sequence>
<comment type="catalytic activity">
    <reaction evidence="1">
        <text>tRNA(Phe) + L-phenylalanine + ATP = L-phenylalanyl-tRNA(Phe) + AMP + diphosphate + H(+)</text>
        <dbReference type="Rhea" id="RHEA:19413"/>
        <dbReference type="Rhea" id="RHEA-COMP:9668"/>
        <dbReference type="Rhea" id="RHEA-COMP:9699"/>
        <dbReference type="ChEBI" id="CHEBI:15378"/>
        <dbReference type="ChEBI" id="CHEBI:30616"/>
        <dbReference type="ChEBI" id="CHEBI:33019"/>
        <dbReference type="ChEBI" id="CHEBI:58095"/>
        <dbReference type="ChEBI" id="CHEBI:78442"/>
        <dbReference type="ChEBI" id="CHEBI:78531"/>
        <dbReference type="ChEBI" id="CHEBI:456215"/>
        <dbReference type="EC" id="6.1.1.20"/>
    </reaction>
</comment>
<comment type="cofactor">
    <cofactor evidence="1">
        <name>Mg(2+)</name>
        <dbReference type="ChEBI" id="CHEBI:18420"/>
    </cofactor>
    <text evidence="1">Binds 2 magnesium ions per tetramer.</text>
</comment>
<comment type="subunit">
    <text evidence="1">Tetramer of two alpha and two beta subunits.</text>
</comment>
<comment type="subcellular location">
    <subcellularLocation>
        <location evidence="1">Cytoplasm</location>
    </subcellularLocation>
</comment>
<comment type="similarity">
    <text evidence="1">Belongs to the class-II aminoacyl-tRNA synthetase family. Phe-tRNA synthetase alpha subunit type 1 subfamily.</text>
</comment>
<keyword id="KW-0030">Aminoacyl-tRNA synthetase</keyword>
<keyword id="KW-0067">ATP-binding</keyword>
<keyword id="KW-0963">Cytoplasm</keyword>
<keyword id="KW-0436">Ligase</keyword>
<keyword id="KW-0460">Magnesium</keyword>
<keyword id="KW-0479">Metal-binding</keyword>
<keyword id="KW-0547">Nucleotide-binding</keyword>
<keyword id="KW-0648">Protein biosynthesis</keyword>
<name>SYFA_FRATW</name>
<evidence type="ECO:0000255" key="1">
    <source>
        <dbReference type="HAMAP-Rule" id="MF_00281"/>
    </source>
</evidence>
<protein>
    <recommendedName>
        <fullName evidence="1">Phenylalanine--tRNA ligase alpha subunit</fullName>
        <ecNumber evidence="1">6.1.1.20</ecNumber>
    </recommendedName>
    <alternativeName>
        <fullName evidence="1">Phenylalanyl-tRNA synthetase alpha subunit</fullName>
        <shortName evidence="1">PheRS</shortName>
    </alternativeName>
</protein>
<reference key="1">
    <citation type="journal article" date="2007" name="PLoS ONE">
        <title>Complete genomic characterization of a pathogenic A.II strain of Francisella tularensis subspecies tularensis.</title>
        <authorList>
            <person name="Beckstrom-Sternberg S.M."/>
            <person name="Auerbach R.K."/>
            <person name="Godbole S."/>
            <person name="Pearson J.V."/>
            <person name="Beckstrom-Sternberg J.S."/>
            <person name="Deng Z."/>
            <person name="Munk C."/>
            <person name="Kubota K."/>
            <person name="Zhou Y."/>
            <person name="Bruce D."/>
            <person name="Noronha J."/>
            <person name="Scheuermann R.H."/>
            <person name="Wang A."/>
            <person name="Wei X."/>
            <person name="Wang J."/>
            <person name="Hao J."/>
            <person name="Wagner D.M."/>
            <person name="Brettin T.S."/>
            <person name="Brown N."/>
            <person name="Gilna P."/>
            <person name="Keim P.S."/>
        </authorList>
    </citation>
    <scope>NUCLEOTIDE SEQUENCE [LARGE SCALE GENOMIC DNA]</scope>
    <source>
        <strain>WY96-3418</strain>
    </source>
</reference>
<feature type="chain" id="PRO_1000006835" description="Phenylalanine--tRNA ligase alpha subunit">
    <location>
        <begin position="1"/>
        <end position="337"/>
    </location>
</feature>
<feature type="binding site" evidence="1">
    <location>
        <position position="252"/>
    </location>
    <ligand>
        <name>Mg(2+)</name>
        <dbReference type="ChEBI" id="CHEBI:18420"/>
        <note>shared with beta subunit</note>
    </ligand>
</feature>
<proteinExistence type="inferred from homology"/>
<organism>
    <name type="scientific">Francisella tularensis subsp. tularensis (strain WY96-3418)</name>
    <dbReference type="NCBI Taxonomy" id="418136"/>
    <lineage>
        <taxon>Bacteria</taxon>
        <taxon>Pseudomonadati</taxon>
        <taxon>Pseudomonadota</taxon>
        <taxon>Gammaproteobacteria</taxon>
        <taxon>Thiotrichales</taxon>
        <taxon>Francisellaceae</taxon>
        <taxon>Francisella</taxon>
    </lineage>
</organism>
<accession>A4IXV3</accession>
<gene>
    <name evidence="1" type="primary">pheS</name>
    <name type="ordered locus">FTW_0911</name>
</gene>
<dbReference type="EC" id="6.1.1.20" evidence="1"/>
<dbReference type="EMBL" id="CP000608">
    <property type="protein sequence ID" value="ABO46754.1"/>
    <property type="molecule type" value="Genomic_DNA"/>
</dbReference>
<dbReference type="RefSeq" id="WP_003021092.1">
    <property type="nucleotide sequence ID" value="NC_009257.1"/>
</dbReference>
<dbReference type="SMR" id="A4IXV3"/>
<dbReference type="KEGG" id="ftw:FTW_0911"/>
<dbReference type="HOGENOM" id="CLU_025086_0_1_6"/>
<dbReference type="GO" id="GO:0005737">
    <property type="term" value="C:cytoplasm"/>
    <property type="evidence" value="ECO:0007669"/>
    <property type="project" value="UniProtKB-SubCell"/>
</dbReference>
<dbReference type="GO" id="GO:0005524">
    <property type="term" value="F:ATP binding"/>
    <property type="evidence" value="ECO:0007669"/>
    <property type="project" value="UniProtKB-UniRule"/>
</dbReference>
<dbReference type="GO" id="GO:0000287">
    <property type="term" value="F:magnesium ion binding"/>
    <property type="evidence" value="ECO:0007669"/>
    <property type="project" value="UniProtKB-UniRule"/>
</dbReference>
<dbReference type="GO" id="GO:0004826">
    <property type="term" value="F:phenylalanine-tRNA ligase activity"/>
    <property type="evidence" value="ECO:0007669"/>
    <property type="project" value="UniProtKB-UniRule"/>
</dbReference>
<dbReference type="GO" id="GO:0000049">
    <property type="term" value="F:tRNA binding"/>
    <property type="evidence" value="ECO:0007669"/>
    <property type="project" value="InterPro"/>
</dbReference>
<dbReference type="GO" id="GO:0006432">
    <property type="term" value="P:phenylalanyl-tRNA aminoacylation"/>
    <property type="evidence" value="ECO:0007669"/>
    <property type="project" value="UniProtKB-UniRule"/>
</dbReference>
<dbReference type="CDD" id="cd00496">
    <property type="entry name" value="PheRS_alpha_core"/>
    <property type="match status" value="1"/>
</dbReference>
<dbReference type="FunFam" id="3.30.930.10:FF:000003">
    <property type="entry name" value="Phenylalanine--tRNA ligase alpha subunit"/>
    <property type="match status" value="1"/>
</dbReference>
<dbReference type="Gene3D" id="3.30.930.10">
    <property type="entry name" value="Bira Bifunctional Protein, Domain 2"/>
    <property type="match status" value="1"/>
</dbReference>
<dbReference type="HAMAP" id="MF_00281">
    <property type="entry name" value="Phe_tRNA_synth_alpha1"/>
    <property type="match status" value="1"/>
</dbReference>
<dbReference type="InterPro" id="IPR006195">
    <property type="entry name" value="aa-tRNA-synth_II"/>
</dbReference>
<dbReference type="InterPro" id="IPR045864">
    <property type="entry name" value="aa-tRNA-synth_II/BPL/LPL"/>
</dbReference>
<dbReference type="InterPro" id="IPR004529">
    <property type="entry name" value="Phe-tRNA-synth_IIc_asu"/>
</dbReference>
<dbReference type="InterPro" id="IPR004188">
    <property type="entry name" value="Phe-tRNA_ligase_II_N"/>
</dbReference>
<dbReference type="InterPro" id="IPR022911">
    <property type="entry name" value="Phe_tRNA_ligase_alpha1_bac"/>
</dbReference>
<dbReference type="InterPro" id="IPR002319">
    <property type="entry name" value="Phenylalanyl-tRNA_Synthase"/>
</dbReference>
<dbReference type="InterPro" id="IPR010978">
    <property type="entry name" value="tRNA-bd_arm"/>
</dbReference>
<dbReference type="NCBIfam" id="TIGR00468">
    <property type="entry name" value="pheS"/>
    <property type="match status" value="1"/>
</dbReference>
<dbReference type="PANTHER" id="PTHR11538:SF41">
    <property type="entry name" value="PHENYLALANINE--TRNA LIGASE, MITOCHONDRIAL"/>
    <property type="match status" value="1"/>
</dbReference>
<dbReference type="PANTHER" id="PTHR11538">
    <property type="entry name" value="PHENYLALANYL-TRNA SYNTHETASE"/>
    <property type="match status" value="1"/>
</dbReference>
<dbReference type="Pfam" id="PF02912">
    <property type="entry name" value="Phe_tRNA-synt_N"/>
    <property type="match status" value="1"/>
</dbReference>
<dbReference type="Pfam" id="PF01409">
    <property type="entry name" value="tRNA-synt_2d"/>
    <property type="match status" value="1"/>
</dbReference>
<dbReference type="SUPFAM" id="SSF55681">
    <property type="entry name" value="Class II aaRS and biotin synthetases"/>
    <property type="match status" value="1"/>
</dbReference>
<dbReference type="SUPFAM" id="SSF46589">
    <property type="entry name" value="tRNA-binding arm"/>
    <property type="match status" value="1"/>
</dbReference>
<dbReference type="PROSITE" id="PS50862">
    <property type="entry name" value="AA_TRNA_LIGASE_II"/>
    <property type="match status" value="1"/>
</dbReference>